<reference key="1">
    <citation type="journal article" date="2003" name="Lancet">
        <title>Genome sequence of Vibrio parahaemolyticus: a pathogenic mechanism distinct from that of V. cholerae.</title>
        <authorList>
            <person name="Makino K."/>
            <person name="Oshima K."/>
            <person name="Kurokawa K."/>
            <person name="Yokoyama K."/>
            <person name="Uda T."/>
            <person name="Tagomori K."/>
            <person name="Iijima Y."/>
            <person name="Najima M."/>
            <person name="Nakano M."/>
            <person name="Yamashita A."/>
            <person name="Kubota Y."/>
            <person name="Kimura S."/>
            <person name="Yasunaga T."/>
            <person name="Honda T."/>
            <person name="Shinagawa H."/>
            <person name="Hattori M."/>
            <person name="Iida T."/>
        </authorList>
    </citation>
    <scope>NUCLEOTIDE SEQUENCE [LARGE SCALE GENOMIC DNA]</scope>
    <source>
        <strain>RIMD 2210633</strain>
    </source>
</reference>
<gene>
    <name evidence="1" type="primary">purM</name>
    <name type="ordered locus">VP2285</name>
</gene>
<organism>
    <name type="scientific">Vibrio parahaemolyticus serotype O3:K6 (strain RIMD 2210633)</name>
    <dbReference type="NCBI Taxonomy" id="223926"/>
    <lineage>
        <taxon>Bacteria</taxon>
        <taxon>Pseudomonadati</taxon>
        <taxon>Pseudomonadota</taxon>
        <taxon>Gammaproteobacteria</taxon>
        <taxon>Vibrionales</taxon>
        <taxon>Vibrionaceae</taxon>
        <taxon>Vibrio</taxon>
    </lineage>
</organism>
<protein>
    <recommendedName>
        <fullName evidence="1">Phosphoribosylformylglycinamidine cyclo-ligase</fullName>
        <ecNumber evidence="1">6.3.3.1</ecNumber>
    </recommendedName>
    <alternativeName>
        <fullName evidence="1">AIR synthase</fullName>
    </alternativeName>
    <alternativeName>
        <fullName evidence="1">AIRS</fullName>
    </alternativeName>
    <alternativeName>
        <fullName evidence="1">Phosphoribosyl-aminoimidazole synthetase</fullName>
    </alternativeName>
</protein>
<dbReference type="EC" id="6.3.3.1" evidence="1"/>
<dbReference type="EMBL" id="BA000031">
    <property type="protein sequence ID" value="BAC60548.1"/>
    <property type="molecule type" value="Genomic_DNA"/>
</dbReference>
<dbReference type="RefSeq" id="NP_798664.1">
    <property type="nucleotide sequence ID" value="NC_004603.1"/>
</dbReference>
<dbReference type="RefSeq" id="WP_005457724.1">
    <property type="nucleotide sequence ID" value="NC_004603.1"/>
</dbReference>
<dbReference type="SMR" id="Q87MH0"/>
<dbReference type="GeneID" id="1189798"/>
<dbReference type="KEGG" id="vpa:VP2285"/>
<dbReference type="PATRIC" id="fig|223926.6.peg.2187"/>
<dbReference type="eggNOG" id="COG0150">
    <property type="taxonomic scope" value="Bacteria"/>
</dbReference>
<dbReference type="HOGENOM" id="CLU_047116_0_0_6"/>
<dbReference type="UniPathway" id="UPA00074">
    <property type="reaction ID" value="UER00129"/>
</dbReference>
<dbReference type="Proteomes" id="UP000002493">
    <property type="component" value="Chromosome 1"/>
</dbReference>
<dbReference type="GO" id="GO:0005829">
    <property type="term" value="C:cytosol"/>
    <property type="evidence" value="ECO:0007669"/>
    <property type="project" value="TreeGrafter"/>
</dbReference>
<dbReference type="GO" id="GO:0005524">
    <property type="term" value="F:ATP binding"/>
    <property type="evidence" value="ECO:0007669"/>
    <property type="project" value="UniProtKB-KW"/>
</dbReference>
<dbReference type="GO" id="GO:0004637">
    <property type="term" value="F:phosphoribosylamine-glycine ligase activity"/>
    <property type="evidence" value="ECO:0007669"/>
    <property type="project" value="TreeGrafter"/>
</dbReference>
<dbReference type="GO" id="GO:0004641">
    <property type="term" value="F:phosphoribosylformylglycinamidine cyclo-ligase activity"/>
    <property type="evidence" value="ECO:0007669"/>
    <property type="project" value="UniProtKB-UniRule"/>
</dbReference>
<dbReference type="GO" id="GO:0006189">
    <property type="term" value="P:'de novo' IMP biosynthetic process"/>
    <property type="evidence" value="ECO:0007669"/>
    <property type="project" value="UniProtKB-UniRule"/>
</dbReference>
<dbReference type="GO" id="GO:0046084">
    <property type="term" value="P:adenine biosynthetic process"/>
    <property type="evidence" value="ECO:0007669"/>
    <property type="project" value="TreeGrafter"/>
</dbReference>
<dbReference type="CDD" id="cd02196">
    <property type="entry name" value="PurM"/>
    <property type="match status" value="1"/>
</dbReference>
<dbReference type="FunFam" id="3.30.1330.10:FF:000001">
    <property type="entry name" value="Phosphoribosylformylglycinamidine cyclo-ligase"/>
    <property type="match status" value="1"/>
</dbReference>
<dbReference type="FunFam" id="3.90.650.10:FF:000001">
    <property type="entry name" value="Phosphoribosylformylglycinamidine cyclo-ligase"/>
    <property type="match status" value="1"/>
</dbReference>
<dbReference type="Gene3D" id="3.90.650.10">
    <property type="entry name" value="PurM-like C-terminal domain"/>
    <property type="match status" value="1"/>
</dbReference>
<dbReference type="Gene3D" id="3.30.1330.10">
    <property type="entry name" value="PurM-like, N-terminal domain"/>
    <property type="match status" value="1"/>
</dbReference>
<dbReference type="HAMAP" id="MF_00741">
    <property type="entry name" value="AIRS"/>
    <property type="match status" value="1"/>
</dbReference>
<dbReference type="InterPro" id="IPR010918">
    <property type="entry name" value="PurM-like_C_dom"/>
</dbReference>
<dbReference type="InterPro" id="IPR036676">
    <property type="entry name" value="PurM-like_C_sf"/>
</dbReference>
<dbReference type="InterPro" id="IPR016188">
    <property type="entry name" value="PurM-like_N"/>
</dbReference>
<dbReference type="InterPro" id="IPR036921">
    <property type="entry name" value="PurM-like_N_sf"/>
</dbReference>
<dbReference type="InterPro" id="IPR004733">
    <property type="entry name" value="PurM_cligase"/>
</dbReference>
<dbReference type="NCBIfam" id="TIGR00878">
    <property type="entry name" value="purM"/>
    <property type="match status" value="1"/>
</dbReference>
<dbReference type="PANTHER" id="PTHR10520:SF12">
    <property type="entry name" value="TRIFUNCTIONAL PURINE BIOSYNTHETIC PROTEIN ADENOSINE-3"/>
    <property type="match status" value="1"/>
</dbReference>
<dbReference type="PANTHER" id="PTHR10520">
    <property type="entry name" value="TRIFUNCTIONAL PURINE BIOSYNTHETIC PROTEIN ADENOSINE-3-RELATED"/>
    <property type="match status" value="1"/>
</dbReference>
<dbReference type="Pfam" id="PF00586">
    <property type="entry name" value="AIRS"/>
    <property type="match status" value="1"/>
</dbReference>
<dbReference type="Pfam" id="PF02769">
    <property type="entry name" value="AIRS_C"/>
    <property type="match status" value="1"/>
</dbReference>
<dbReference type="SUPFAM" id="SSF56042">
    <property type="entry name" value="PurM C-terminal domain-like"/>
    <property type="match status" value="1"/>
</dbReference>
<dbReference type="SUPFAM" id="SSF55326">
    <property type="entry name" value="PurM N-terminal domain-like"/>
    <property type="match status" value="1"/>
</dbReference>
<accession>Q87MH0</accession>
<feature type="chain" id="PRO_0000148271" description="Phosphoribosylformylglycinamidine cyclo-ligase">
    <location>
        <begin position="1"/>
        <end position="346"/>
    </location>
</feature>
<name>PUR5_VIBPA</name>
<comment type="catalytic activity">
    <reaction evidence="1">
        <text>2-formamido-N(1)-(5-O-phospho-beta-D-ribosyl)acetamidine + ATP = 5-amino-1-(5-phospho-beta-D-ribosyl)imidazole + ADP + phosphate + H(+)</text>
        <dbReference type="Rhea" id="RHEA:23032"/>
        <dbReference type="ChEBI" id="CHEBI:15378"/>
        <dbReference type="ChEBI" id="CHEBI:30616"/>
        <dbReference type="ChEBI" id="CHEBI:43474"/>
        <dbReference type="ChEBI" id="CHEBI:137981"/>
        <dbReference type="ChEBI" id="CHEBI:147287"/>
        <dbReference type="ChEBI" id="CHEBI:456216"/>
        <dbReference type="EC" id="6.3.3.1"/>
    </reaction>
</comment>
<comment type="pathway">
    <text evidence="1">Purine metabolism; IMP biosynthesis via de novo pathway; 5-amino-1-(5-phospho-D-ribosyl)imidazole from N(2)-formyl-N(1)-(5-phospho-D-ribosyl)glycinamide: step 2/2.</text>
</comment>
<comment type="subcellular location">
    <subcellularLocation>
        <location evidence="1">Cytoplasm</location>
    </subcellularLocation>
</comment>
<comment type="similarity">
    <text evidence="1">Belongs to the AIR synthase family.</text>
</comment>
<sequence>MSGNNSSLSYKDAGVDIDAGNALVDRIKGAVKRTRRPEVMGGIGGFGALCELPTKYKQPVLVSGTDGVGTKLRLALDMNKHDTIGIDLVAMCVNDLIVQGAEPLFFLDYYATGKLDVDTAADVVSGIADGCVQAGCALIGGETAEMPGMYEGEDYDVAGFCVGVVEKEDVIDGTKVAAGDALIAVGSSGPHSNGYSLIRKILEVSGADKNEELAGRTIGEHLLEPTKIYIKSALKMIEKHDIHAISHITGGGFWENIPRVLPEGTKAVIDGNSWEWPIIFKWLQEKGNVETHEMYRTFNCGVGLVVALPKDQADAAVALLKEEGENAWVIGEIAQAEANEEQVEIN</sequence>
<proteinExistence type="inferred from homology"/>
<evidence type="ECO:0000255" key="1">
    <source>
        <dbReference type="HAMAP-Rule" id="MF_00741"/>
    </source>
</evidence>
<keyword id="KW-0067">ATP-binding</keyword>
<keyword id="KW-0963">Cytoplasm</keyword>
<keyword id="KW-0436">Ligase</keyword>
<keyword id="KW-0547">Nucleotide-binding</keyword>
<keyword id="KW-0658">Purine biosynthesis</keyword>